<sequence length="178" mass="19843">MYFLFFFLLFLFPVGVKGVEEELRALEGEDVSFYGEERALAFFLLIGREDGKFQELCSGGNCSSCSAFAGRVRFKERQFTLSKVQVRETGTRFKVRSRHAKGNSTLLCYKLTVAKFRPVLVPVVLSGFSIGLSCVDHSNPWGFSAVFIWDMNHRGTTDGRGGITGGKKWVSALARAAF</sequence>
<evidence type="ECO:0000255" key="1"/>
<reference key="1">
    <citation type="journal article" date="2002" name="J. Gen. Virol.">
        <title>Genetic analysis of an adenovirus isolated from corn snake (Elaphe guttata) implies common origin with the members of the proposed new genus Atadenovirus.</title>
        <authorList>
            <person name="Farkas S.L."/>
            <person name="Benko M."/>
            <person name="Elo P.T."/>
            <person name="Ursu K."/>
            <person name="Dan A."/>
            <person name="Ahne W."/>
            <person name="Harrach B."/>
        </authorList>
    </citation>
    <scope>NUCLEOTIDE SEQUENCE [GENOMIC DNA]</scope>
</reference>
<name>105R_ADES1</name>
<keyword id="KW-1185">Reference proteome</keyword>
<keyword id="KW-0732">Signal</keyword>
<protein>
    <recommendedName>
        <fullName>Protein 105R</fullName>
    </recommendedName>
</protein>
<feature type="signal peptide" evidence="1">
    <location>
        <begin position="1"/>
        <end position="18"/>
    </location>
</feature>
<feature type="chain" id="PRO_0000425915" description="Protein 105R">
    <location>
        <begin position="19"/>
        <end position="178"/>
    </location>
</feature>
<organismHost>
    <name type="scientific">Pantherophis guttatus</name>
    <name type="common">Corn snake</name>
    <name type="synonym">Elaphe guttata</name>
    <dbReference type="NCBI Taxonomy" id="94885"/>
</organismHost>
<dbReference type="EMBL" id="DQ106414">
    <property type="protein sequence ID" value="ABA47252.1"/>
    <property type="molecule type" value="Genomic_DNA"/>
</dbReference>
<dbReference type="RefSeq" id="YP_001552269.1">
    <property type="nucleotide sequence ID" value="NC_009989.1"/>
</dbReference>
<dbReference type="GeneID" id="10973883"/>
<dbReference type="KEGG" id="vg:10973883"/>
<dbReference type="Proteomes" id="UP000136605">
    <property type="component" value="Genome"/>
</dbReference>
<accession>A9CBA2</accession>
<proteinExistence type="inferred from homology"/>
<organism>
    <name type="scientific">Snake adenovirus serotype 1</name>
    <name type="common">SnAdV-1</name>
    <dbReference type="NCBI Taxonomy" id="189830"/>
    <lineage>
        <taxon>Viruses</taxon>
        <taxon>Varidnaviria</taxon>
        <taxon>Bamfordvirae</taxon>
        <taxon>Preplasmiviricota</taxon>
        <taxon>Tectiliviricetes</taxon>
        <taxon>Rowavirales</taxon>
        <taxon>Adenoviridae</taxon>
        <taxon>Atadenovirus</taxon>
        <taxon>Snake atadenovirus A</taxon>
    </lineage>
</organism>